<sequence length="75" mass="8821">MDSKYLFVFLIFNVIVIDLCQGFLWGLIPGAISAVTSLIKKGRRRRELGSQYDYLQDFRKRELDLDDLLSKFPDY</sequence>
<comment type="function">
    <text evidence="2 3">Antimicrobial peptide that acts by breaking the cell wall (PubMed:21876042). Is active against Gram-positive bacteria, fungi and antibiotic-resistant pathogens: S.aureus (MIC=5 ug/ml), M.luteus (MIC=5 ug/ml), B.thuringiensis (MIC=10 ug/ml), B.subtilis (MIC=10 ug/ml), C.albicans (MIC=20 ug/ml), methicillin-resistant S.aureus (MIC=5-10 ug/ml), and penicillin-resistant S.epidermidis (MIC=10 ug/ml) (PubMed:21876042). Also shows potent activity against antibiotic-sensitive and -resistant Acinetobacter baumannii (MIC=10-20 uM) (PubMed:34022355). Shows cytolytic activity against human erythrocytes (PubMed:34022355). In vivo, is efficient in curing staphylococcal skin infection in mice, when externally applied (PubMed:21876042).</text>
</comment>
<comment type="subcellular location">
    <subcellularLocation>
        <location evidence="7">Secreted</location>
    </subcellularLocation>
    <subcellularLocation>
        <location evidence="6">Target cell membrane</location>
    </subcellularLocation>
</comment>
<comment type="tissue specificity">
    <text evidence="7">Expressed by the venom gland.</text>
</comment>
<comment type="domain">
    <text evidence="9">Amphipathic and cationic peptide with an alpha-helical structure.</text>
</comment>
<comment type="miscellaneous">
    <text evidence="7 8">Negative results: has no activity against Gram-negative bacteria (E.coli and P.aeruginosa) (PubMed:21876042). Inhibits hepatitis B virus replication in the HepG2.2.15 cell line by about 30% (PubMed:22791717).</text>
</comment>
<comment type="similarity">
    <text evidence="6">Belongs to the non-disulfide-bridged peptide (NDBP) superfamily. Short antimicrobial peptide (group 4) family.</text>
</comment>
<feature type="signal peptide" evidence="1">
    <location>
        <begin position="1"/>
        <end position="22"/>
    </location>
</feature>
<feature type="peptide" id="PRO_0000418800" description="Antimicrobial peptide ctriporin" evidence="7">
    <location>
        <begin position="23"/>
        <end position="41"/>
    </location>
</feature>
<feature type="propeptide" id="PRO_0000418801" evidence="7">
    <location>
        <begin position="47"/>
        <end position="75"/>
    </location>
</feature>
<feature type="modified residue" description="Lysine amide" evidence="7">
    <location>
        <position position="41"/>
    </location>
</feature>
<organism>
    <name type="scientific">Chaerilus tricostatus</name>
    <name type="common">Scorpion</name>
    <dbReference type="NCBI Taxonomy" id="1055734"/>
    <lineage>
        <taxon>Eukaryota</taxon>
        <taxon>Metazoa</taxon>
        <taxon>Ecdysozoa</taxon>
        <taxon>Arthropoda</taxon>
        <taxon>Chelicerata</taxon>
        <taxon>Arachnida</taxon>
        <taxon>Scorpiones</taxon>
        <taxon>Chaerilida</taxon>
        <taxon>Chaeriloidea</taxon>
        <taxon>Chaerilidae</taxon>
        <taxon>Chaerilus</taxon>
    </lineage>
</organism>
<keyword id="KW-0027">Amidation</keyword>
<keyword id="KW-0044">Antibiotic</keyword>
<keyword id="KW-0929">Antimicrobial</keyword>
<keyword id="KW-0165">Cleavage on pair of basic residues</keyword>
<keyword id="KW-0204">Cytolysis</keyword>
<keyword id="KW-0295">Fungicide</keyword>
<keyword id="KW-0472">Membrane</keyword>
<keyword id="KW-0964">Secreted</keyword>
<keyword id="KW-0732">Signal</keyword>
<keyword id="KW-1052">Target cell membrane</keyword>
<keyword id="KW-1053">Target membrane</keyword>
<keyword id="KW-0812">Transmembrane</keyword>
<proteinExistence type="evidence at protein level"/>
<protein>
    <recommendedName>
        <fullName evidence="4">Antimicrobial peptide ctriporin</fullName>
        <shortName>Riporin</shortName>
    </recommendedName>
    <alternativeName>
        <fullName evidence="5">Non-disulfide-bridged peptide 4.10</fullName>
        <shortName evidence="5">NDBP-4.10</shortName>
    </alternativeName>
</protein>
<evidence type="ECO:0000255" key="1"/>
<evidence type="ECO:0000269" key="2">
    <source>
    </source>
</evidence>
<evidence type="ECO:0000269" key="3">
    <source>
    </source>
</evidence>
<evidence type="ECO:0000303" key="4">
    <source>
    </source>
</evidence>
<evidence type="ECO:0000303" key="5">
    <source>
    </source>
</evidence>
<evidence type="ECO:0000305" key="6"/>
<evidence type="ECO:0000305" key="7">
    <source>
    </source>
</evidence>
<evidence type="ECO:0000305" key="8">
    <source>
    </source>
</evidence>
<evidence type="ECO:0000305" key="9">
    <source>
    </source>
</evidence>
<accession>G1FE62</accession>
<name>NDB4A_CHATC</name>
<dbReference type="EMBL" id="JN172934">
    <property type="protein sequence ID" value="AEK32596.1"/>
    <property type="molecule type" value="mRNA"/>
</dbReference>
<dbReference type="BMRB" id="G1FE62"/>
<dbReference type="GO" id="GO:0005576">
    <property type="term" value="C:extracellular region"/>
    <property type="evidence" value="ECO:0007669"/>
    <property type="project" value="UniProtKB-SubCell"/>
</dbReference>
<dbReference type="GO" id="GO:0016020">
    <property type="term" value="C:membrane"/>
    <property type="evidence" value="ECO:0007669"/>
    <property type="project" value="UniProtKB-KW"/>
</dbReference>
<dbReference type="GO" id="GO:0044218">
    <property type="term" value="C:other organism cell membrane"/>
    <property type="evidence" value="ECO:0007669"/>
    <property type="project" value="UniProtKB-KW"/>
</dbReference>
<dbReference type="GO" id="GO:0042742">
    <property type="term" value="P:defense response to bacterium"/>
    <property type="evidence" value="ECO:0007669"/>
    <property type="project" value="UniProtKB-KW"/>
</dbReference>
<dbReference type="GO" id="GO:0050832">
    <property type="term" value="P:defense response to fungus"/>
    <property type="evidence" value="ECO:0007669"/>
    <property type="project" value="UniProtKB-KW"/>
</dbReference>
<dbReference type="GO" id="GO:0031640">
    <property type="term" value="P:killing of cells of another organism"/>
    <property type="evidence" value="ECO:0007669"/>
    <property type="project" value="UniProtKB-KW"/>
</dbReference>
<reference key="1">
    <citation type="journal article" date="2011" name="Antimicrob. Agents Chemother.">
        <title>Ctriporin, a new anti-methicillin-resistant Staphylococcus aureus peptide from the venom of the scorpion Chaerilus tricostatus.</title>
        <authorList>
            <person name="Fan Z."/>
            <person name="Cao L."/>
            <person name="He Y."/>
            <person name="Hu J."/>
            <person name="Di Z."/>
            <person name="Wu Y."/>
            <person name="Li W."/>
            <person name="Cao Z."/>
        </authorList>
    </citation>
    <scope>NUCLEOTIDE SEQUENCE [MRNA]</scope>
    <scope>SYNTHESIS OF 23-41</scope>
    <scope>FUNCTION</scope>
    <scope>AMIDATION AT LYS-41</scope>
    <source>
        <tissue>Venom gland</tissue>
    </source>
</reference>
<reference key="2">
    <citation type="journal article" date="2012" name="J. Biol. Chem.">
        <title>Mucroporin-M1 inhibits hepatitis B virus replication by activating the mitogen-activated protein kinase (MAPK) pathway and down-regulating HNF4alpha in vitro and in vivo.</title>
        <authorList>
            <person name="Zhao Z."/>
            <person name="Hong W."/>
            <person name="Zeng Z."/>
            <person name="Wu Y."/>
            <person name="Hu K."/>
            <person name="Tian X."/>
            <person name="Li W."/>
            <person name="Cao Z."/>
        </authorList>
    </citation>
    <scope>SYNTHESIS OF 23-41</scope>
</reference>
<reference key="3">
    <citation type="journal article" date="2021" name="Microb. Pathog.">
        <title>Identification of the scorpion venom-derived antimicrobial peptide Hp1404 as a new antimicrobial agent against carbapenem-resistant Acinetobacter baumannii.</title>
        <authorList>
            <person name="Luo X."/>
            <person name="Ye X."/>
            <person name="Ding L."/>
            <person name="Zhu W."/>
            <person name="Zhao Z."/>
            <person name="Luo D."/>
            <person name="Liu N."/>
            <person name="Sun L."/>
            <person name="Chen Z."/>
        </authorList>
    </citation>
    <scope>FUNCTION</scope>
    <scope>SYNTHESIS OF 24-41 (AMIDATED PEPTIDE)</scope>
</reference>
<reference key="4">
    <citation type="journal article" date="2014" name="Peptides">
        <title>Scorpion venom peptides with no disulfide bridges: a review.</title>
        <authorList>
            <person name="Almaaytah A."/>
            <person name="Albalas Q."/>
        </authorList>
    </citation>
    <scope>NOMENCLATURE</scope>
</reference>